<proteinExistence type="inferred from homology"/>
<reference key="1">
    <citation type="journal article" date="2009" name="Infect. Immun.">
        <title>Comparative genomics reveal extensive transposon-mediated genomic plasticity and diversity among potential effector proteins within the genus Coxiella.</title>
        <authorList>
            <person name="Beare P.A."/>
            <person name="Unsworth N."/>
            <person name="Andoh M."/>
            <person name="Voth D.E."/>
            <person name="Omsland A."/>
            <person name="Gilk S.D."/>
            <person name="Williams K.P."/>
            <person name="Sobral B.W."/>
            <person name="Kupko J.J. III"/>
            <person name="Porcella S.F."/>
            <person name="Samuel J.E."/>
            <person name="Heinzen R.A."/>
        </authorList>
    </citation>
    <scope>NUCLEOTIDE SEQUENCE [LARGE SCALE GENOMIC DNA]</scope>
    <source>
        <strain>CbuK_Q154</strain>
    </source>
</reference>
<dbReference type="EC" id="6.1.1.17" evidence="1"/>
<dbReference type="EMBL" id="CP001020">
    <property type="protein sequence ID" value="ACJ19684.1"/>
    <property type="status" value="ALT_INIT"/>
    <property type="molecule type" value="Genomic_DNA"/>
</dbReference>
<dbReference type="RefSeq" id="WP_005771584.1">
    <property type="nucleotide sequence ID" value="NC_011528.1"/>
</dbReference>
<dbReference type="SMR" id="B6J5A0"/>
<dbReference type="KEGG" id="cbc:CbuK_0394"/>
<dbReference type="HOGENOM" id="CLU_015768_6_0_6"/>
<dbReference type="GO" id="GO:0005829">
    <property type="term" value="C:cytosol"/>
    <property type="evidence" value="ECO:0007669"/>
    <property type="project" value="TreeGrafter"/>
</dbReference>
<dbReference type="GO" id="GO:0005524">
    <property type="term" value="F:ATP binding"/>
    <property type="evidence" value="ECO:0007669"/>
    <property type="project" value="UniProtKB-UniRule"/>
</dbReference>
<dbReference type="GO" id="GO:0004818">
    <property type="term" value="F:glutamate-tRNA ligase activity"/>
    <property type="evidence" value="ECO:0007669"/>
    <property type="project" value="UniProtKB-UniRule"/>
</dbReference>
<dbReference type="GO" id="GO:0000049">
    <property type="term" value="F:tRNA binding"/>
    <property type="evidence" value="ECO:0007669"/>
    <property type="project" value="InterPro"/>
</dbReference>
<dbReference type="GO" id="GO:0008270">
    <property type="term" value="F:zinc ion binding"/>
    <property type="evidence" value="ECO:0007669"/>
    <property type="project" value="UniProtKB-UniRule"/>
</dbReference>
<dbReference type="GO" id="GO:0006424">
    <property type="term" value="P:glutamyl-tRNA aminoacylation"/>
    <property type="evidence" value="ECO:0007669"/>
    <property type="project" value="UniProtKB-UniRule"/>
</dbReference>
<dbReference type="CDD" id="cd00808">
    <property type="entry name" value="GluRS_core"/>
    <property type="match status" value="1"/>
</dbReference>
<dbReference type="FunFam" id="3.40.50.620:FF:000007">
    <property type="entry name" value="Glutamate--tRNA ligase"/>
    <property type="match status" value="1"/>
</dbReference>
<dbReference type="Gene3D" id="1.10.10.350">
    <property type="match status" value="1"/>
</dbReference>
<dbReference type="Gene3D" id="3.40.50.620">
    <property type="entry name" value="HUPs"/>
    <property type="match status" value="1"/>
</dbReference>
<dbReference type="HAMAP" id="MF_00022">
    <property type="entry name" value="Glu_tRNA_synth_type1"/>
    <property type="match status" value="1"/>
</dbReference>
<dbReference type="InterPro" id="IPR045462">
    <property type="entry name" value="aa-tRNA-synth_I_cd-bd"/>
</dbReference>
<dbReference type="InterPro" id="IPR020751">
    <property type="entry name" value="aa-tRNA-synth_I_codon-bd_sub2"/>
</dbReference>
<dbReference type="InterPro" id="IPR001412">
    <property type="entry name" value="aa-tRNA-synth_I_CS"/>
</dbReference>
<dbReference type="InterPro" id="IPR008925">
    <property type="entry name" value="aa_tRNA-synth_I_cd-bd_sf"/>
</dbReference>
<dbReference type="InterPro" id="IPR004527">
    <property type="entry name" value="Glu-tRNA-ligase_bac/mito"/>
</dbReference>
<dbReference type="InterPro" id="IPR000924">
    <property type="entry name" value="Glu/Gln-tRNA-synth"/>
</dbReference>
<dbReference type="InterPro" id="IPR020058">
    <property type="entry name" value="Glu/Gln-tRNA-synth_Ib_cat-dom"/>
</dbReference>
<dbReference type="InterPro" id="IPR049940">
    <property type="entry name" value="GluQ/Sye"/>
</dbReference>
<dbReference type="InterPro" id="IPR033910">
    <property type="entry name" value="GluRS_core"/>
</dbReference>
<dbReference type="InterPro" id="IPR014729">
    <property type="entry name" value="Rossmann-like_a/b/a_fold"/>
</dbReference>
<dbReference type="NCBIfam" id="TIGR00464">
    <property type="entry name" value="gltX_bact"/>
    <property type="match status" value="1"/>
</dbReference>
<dbReference type="PANTHER" id="PTHR43311">
    <property type="entry name" value="GLUTAMATE--TRNA LIGASE"/>
    <property type="match status" value="1"/>
</dbReference>
<dbReference type="PANTHER" id="PTHR43311:SF2">
    <property type="entry name" value="GLUTAMATE--TRNA LIGASE, MITOCHONDRIAL-RELATED"/>
    <property type="match status" value="1"/>
</dbReference>
<dbReference type="Pfam" id="PF19269">
    <property type="entry name" value="Anticodon_2"/>
    <property type="match status" value="1"/>
</dbReference>
<dbReference type="Pfam" id="PF00749">
    <property type="entry name" value="tRNA-synt_1c"/>
    <property type="match status" value="1"/>
</dbReference>
<dbReference type="PRINTS" id="PR00987">
    <property type="entry name" value="TRNASYNTHGLU"/>
</dbReference>
<dbReference type="SUPFAM" id="SSF48163">
    <property type="entry name" value="An anticodon-binding domain of class I aminoacyl-tRNA synthetases"/>
    <property type="match status" value="1"/>
</dbReference>
<dbReference type="SUPFAM" id="SSF52374">
    <property type="entry name" value="Nucleotidylyl transferase"/>
    <property type="match status" value="1"/>
</dbReference>
<dbReference type="PROSITE" id="PS00178">
    <property type="entry name" value="AA_TRNA_LIGASE_I"/>
    <property type="match status" value="1"/>
</dbReference>
<sequence>MKHIRTRFAPSPTGYLHIGGVRTALFSWLFARQNNGAFILRIEDTDVARSTQASVDAILEGLRWLQIDWNEGPYYQSQRMDRYREVIEQLVKSDDAYRCYCSKERLIELRNTQLKNKQKPRYDGFCRDKAPRQSNEPFVIRFRNPVEGAVVFDDLIRGTISIDNRELDDLIIARSDGGPTYNLTVVVDDWDMKITHVIRGDDHINNTPRQINILHALGAELPHYGHVPMILGPDGKRLSKRHGAVSVLQYRDEGYLPEALMNYLIRLGWAHGDQEIFSREEMVQLFDISAVSRSPAAFNPEKLLWLNQHYLKTVSPTIIAKAFATQLEKAGTDLRNGPSLEQVIALQAERTKTLKEMAQRSFYFYQEVRSYDEKAARKHLLATIVEPLQRVRERLASLPSWEKEAIHEVIVETAQLHQLKLGQLAQPIRVALTGDTVSPPIDATLYLIGRDSALKRLDHAIRFIHQGMG</sequence>
<protein>
    <recommendedName>
        <fullName evidence="1">Glutamate--tRNA ligase 1</fullName>
        <ecNumber evidence="1">6.1.1.17</ecNumber>
    </recommendedName>
    <alternativeName>
        <fullName evidence="1">Glutamyl-tRNA synthetase 1</fullName>
        <shortName evidence="1">GluRS 1</shortName>
    </alternativeName>
</protein>
<evidence type="ECO:0000255" key="1">
    <source>
        <dbReference type="HAMAP-Rule" id="MF_00022"/>
    </source>
</evidence>
<evidence type="ECO:0000305" key="2"/>
<keyword id="KW-0030">Aminoacyl-tRNA synthetase</keyword>
<keyword id="KW-0067">ATP-binding</keyword>
<keyword id="KW-0963">Cytoplasm</keyword>
<keyword id="KW-0436">Ligase</keyword>
<keyword id="KW-0479">Metal-binding</keyword>
<keyword id="KW-0547">Nucleotide-binding</keyword>
<keyword id="KW-0648">Protein biosynthesis</keyword>
<keyword id="KW-0862">Zinc</keyword>
<comment type="function">
    <text evidence="1">Catalyzes the attachment of glutamate to tRNA(Glu) in a two-step reaction: glutamate is first activated by ATP to form Glu-AMP and then transferred to the acceptor end of tRNA(Glu).</text>
</comment>
<comment type="catalytic activity">
    <reaction evidence="1">
        <text>tRNA(Glu) + L-glutamate + ATP = L-glutamyl-tRNA(Glu) + AMP + diphosphate</text>
        <dbReference type="Rhea" id="RHEA:23540"/>
        <dbReference type="Rhea" id="RHEA-COMP:9663"/>
        <dbReference type="Rhea" id="RHEA-COMP:9680"/>
        <dbReference type="ChEBI" id="CHEBI:29985"/>
        <dbReference type="ChEBI" id="CHEBI:30616"/>
        <dbReference type="ChEBI" id="CHEBI:33019"/>
        <dbReference type="ChEBI" id="CHEBI:78442"/>
        <dbReference type="ChEBI" id="CHEBI:78520"/>
        <dbReference type="ChEBI" id="CHEBI:456215"/>
        <dbReference type="EC" id="6.1.1.17"/>
    </reaction>
</comment>
<comment type="cofactor">
    <cofactor evidence="1">
        <name>Zn(2+)</name>
        <dbReference type="ChEBI" id="CHEBI:29105"/>
    </cofactor>
    <text evidence="1">Binds 1 zinc ion per subunit.</text>
</comment>
<comment type="subunit">
    <text evidence="1">Monomer.</text>
</comment>
<comment type="subcellular location">
    <subcellularLocation>
        <location evidence="1">Cytoplasm</location>
    </subcellularLocation>
</comment>
<comment type="similarity">
    <text evidence="1">Belongs to the class-I aminoacyl-tRNA synthetase family. Glutamate--tRNA ligase type 1 subfamily.</text>
</comment>
<comment type="sequence caution" evidence="2">
    <conflict type="erroneous initiation">
        <sequence resource="EMBL-CDS" id="ACJ19684"/>
    </conflict>
</comment>
<accession>B6J5A0</accession>
<feature type="chain" id="PRO_0000367657" description="Glutamate--tRNA ligase 1">
    <location>
        <begin position="1"/>
        <end position="469"/>
    </location>
</feature>
<feature type="short sequence motif" description="'HIGH' region" evidence="1">
    <location>
        <begin position="10"/>
        <end position="20"/>
    </location>
</feature>
<feature type="short sequence motif" description="'KMSKS' region" evidence="1">
    <location>
        <begin position="237"/>
        <end position="241"/>
    </location>
</feature>
<feature type="binding site" evidence="1">
    <location>
        <position position="99"/>
    </location>
    <ligand>
        <name>Zn(2+)</name>
        <dbReference type="ChEBI" id="CHEBI:29105"/>
    </ligand>
</feature>
<feature type="binding site" evidence="1">
    <location>
        <position position="101"/>
    </location>
    <ligand>
        <name>Zn(2+)</name>
        <dbReference type="ChEBI" id="CHEBI:29105"/>
    </ligand>
</feature>
<feature type="binding site" evidence="1">
    <location>
        <position position="126"/>
    </location>
    <ligand>
        <name>Zn(2+)</name>
        <dbReference type="ChEBI" id="CHEBI:29105"/>
    </ligand>
</feature>
<feature type="binding site" evidence="1">
    <location>
        <position position="128"/>
    </location>
    <ligand>
        <name>Zn(2+)</name>
        <dbReference type="ChEBI" id="CHEBI:29105"/>
    </ligand>
</feature>
<feature type="binding site" evidence="1">
    <location>
        <position position="240"/>
    </location>
    <ligand>
        <name>ATP</name>
        <dbReference type="ChEBI" id="CHEBI:30616"/>
    </ligand>
</feature>
<organism>
    <name type="scientific">Coxiella burnetii (strain CbuK_Q154)</name>
    <name type="common">Coxiella burnetii (strain Q154)</name>
    <dbReference type="NCBI Taxonomy" id="434924"/>
    <lineage>
        <taxon>Bacteria</taxon>
        <taxon>Pseudomonadati</taxon>
        <taxon>Pseudomonadota</taxon>
        <taxon>Gammaproteobacteria</taxon>
        <taxon>Legionellales</taxon>
        <taxon>Coxiellaceae</taxon>
        <taxon>Coxiella</taxon>
    </lineage>
</organism>
<gene>
    <name evidence="1" type="primary">gltX1</name>
    <name type="ordered locus">CbuK_0394</name>
</gene>
<name>SYE1_COXB1</name>